<comment type="function">
    <text evidence="1">Translocates 4-amino-4-deoxy-L-arabinose-phosphoundecaprenol (alpha-L-Ara4N-phosphoundecaprenol) from the cytoplasmic to the periplasmic side of the inner membrane.</text>
</comment>
<comment type="pathway">
    <text evidence="1">Bacterial outer membrane biogenesis; lipopolysaccharide biosynthesis.</text>
</comment>
<comment type="subunit">
    <text evidence="1">Heterodimer of ArnE and ArnF.</text>
</comment>
<comment type="subcellular location">
    <subcellularLocation>
        <location evidence="1">Cell inner membrane</location>
        <topology evidence="1">Multi-pass membrane protein</topology>
    </subcellularLocation>
</comment>
<comment type="similarity">
    <text evidence="1">Belongs to the ArnE family.</text>
</comment>
<comment type="sequence caution" evidence="2">
    <conflict type="erroneous initiation">
        <sequence resource="EMBL-CDS" id="CAR58654"/>
    </conflict>
</comment>
<name>ARNE_SALPK</name>
<feature type="chain" id="PRO_0000382998" description="Probable 4-amino-4-deoxy-L-arabinose-phosphoundecaprenol flippase subunit ArnE">
    <location>
        <begin position="1"/>
        <end position="111"/>
    </location>
</feature>
<feature type="transmembrane region" description="Helical" evidence="1">
    <location>
        <begin position="38"/>
        <end position="58"/>
    </location>
</feature>
<feature type="transmembrane region" description="Helical" evidence="1">
    <location>
        <begin position="61"/>
        <end position="81"/>
    </location>
</feature>
<feature type="transmembrane region" description="Helical" evidence="1">
    <location>
        <begin position="89"/>
        <end position="109"/>
    </location>
</feature>
<feature type="domain" description="EamA" evidence="1">
    <location>
        <begin position="40"/>
        <end position="109"/>
    </location>
</feature>
<organism>
    <name type="scientific">Salmonella paratyphi A (strain AKU_12601)</name>
    <dbReference type="NCBI Taxonomy" id="554290"/>
    <lineage>
        <taxon>Bacteria</taxon>
        <taxon>Pseudomonadati</taxon>
        <taxon>Pseudomonadota</taxon>
        <taxon>Gammaproteobacteria</taxon>
        <taxon>Enterobacterales</taxon>
        <taxon>Enterobacteriaceae</taxon>
        <taxon>Salmonella</taxon>
    </lineage>
</organism>
<protein>
    <recommendedName>
        <fullName evidence="1">Probable 4-amino-4-deoxy-L-arabinose-phosphoundecaprenol flippase subunit ArnE</fullName>
        <shortName evidence="1">L-Ara4N-phosphoundecaprenol flippase subunit ArnE</shortName>
    </recommendedName>
    <alternativeName>
        <fullName evidence="1">Undecaprenyl phosphate-aminoarabinose flippase subunit ArnE</fullName>
    </alternativeName>
</protein>
<dbReference type="EMBL" id="FM200053">
    <property type="protein sequence ID" value="CAR58654.1"/>
    <property type="status" value="ALT_INIT"/>
    <property type="molecule type" value="Genomic_DNA"/>
</dbReference>
<dbReference type="RefSeq" id="WP_000579483.1">
    <property type="nucleotide sequence ID" value="NC_011147.1"/>
</dbReference>
<dbReference type="SMR" id="B5BCP3"/>
<dbReference type="KEGG" id="sek:SSPA0525"/>
<dbReference type="HOGENOM" id="CLU_2668935_0_0_6"/>
<dbReference type="UniPathway" id="UPA00030"/>
<dbReference type="Proteomes" id="UP000001869">
    <property type="component" value="Chromosome"/>
</dbReference>
<dbReference type="GO" id="GO:0005886">
    <property type="term" value="C:plasma membrane"/>
    <property type="evidence" value="ECO:0007669"/>
    <property type="project" value="UniProtKB-SubCell"/>
</dbReference>
<dbReference type="GO" id="GO:1901505">
    <property type="term" value="F:carbohydrate derivative transmembrane transporter activity"/>
    <property type="evidence" value="ECO:0007669"/>
    <property type="project" value="InterPro"/>
</dbReference>
<dbReference type="GO" id="GO:0009245">
    <property type="term" value="P:lipid A biosynthetic process"/>
    <property type="evidence" value="ECO:0007669"/>
    <property type="project" value="UniProtKB-UniRule"/>
</dbReference>
<dbReference type="GO" id="GO:0009103">
    <property type="term" value="P:lipopolysaccharide biosynthetic process"/>
    <property type="evidence" value="ECO:0007669"/>
    <property type="project" value="UniProtKB-UniRule"/>
</dbReference>
<dbReference type="FunFam" id="1.10.3730.20:FF:000002">
    <property type="entry name" value="Probable 4-amino-4-deoxy-L-arabinose-phosphoundecaprenol flippase subunit ArnE"/>
    <property type="match status" value="1"/>
</dbReference>
<dbReference type="Gene3D" id="1.10.3730.20">
    <property type="match status" value="1"/>
</dbReference>
<dbReference type="HAMAP" id="MF_01869">
    <property type="entry name" value="Flippase_ArnE"/>
    <property type="match status" value="1"/>
</dbReference>
<dbReference type="InterPro" id="IPR000620">
    <property type="entry name" value="EamA_dom"/>
</dbReference>
<dbReference type="InterPro" id="IPR022883">
    <property type="entry name" value="Flippase_ArnE"/>
</dbReference>
<dbReference type="InterPro" id="IPR000390">
    <property type="entry name" value="Small_drug/metabolite_transptr"/>
</dbReference>
<dbReference type="NCBIfam" id="NF011625">
    <property type="entry name" value="PRK15051.1"/>
    <property type="match status" value="1"/>
</dbReference>
<dbReference type="PANTHER" id="PTHR30561:SF23">
    <property type="entry name" value="4-AMINO-4-DEOXY-L-ARABINOSE-PHOSPHOUNDECAPRENOL FLIPPASE SUBUNIT ARNE-RELATED"/>
    <property type="match status" value="1"/>
</dbReference>
<dbReference type="PANTHER" id="PTHR30561">
    <property type="entry name" value="SMR FAMILY PROTON-DEPENDENT DRUG EFFLUX TRANSPORTER SUGE"/>
    <property type="match status" value="1"/>
</dbReference>
<dbReference type="Pfam" id="PF00892">
    <property type="entry name" value="EamA"/>
    <property type="match status" value="1"/>
</dbReference>
<dbReference type="SUPFAM" id="SSF103481">
    <property type="entry name" value="Multidrug resistance efflux transporter EmrE"/>
    <property type="match status" value="1"/>
</dbReference>
<reference key="1">
    <citation type="journal article" date="2009" name="BMC Genomics">
        <title>Pseudogene accumulation in the evolutionary histories of Salmonella enterica serovars Paratyphi A and Typhi.</title>
        <authorList>
            <person name="Holt K.E."/>
            <person name="Thomson N.R."/>
            <person name="Wain J."/>
            <person name="Langridge G.C."/>
            <person name="Hasan R."/>
            <person name="Bhutta Z.A."/>
            <person name="Quail M.A."/>
            <person name="Norbertczak H."/>
            <person name="Walker D."/>
            <person name="Simmonds M."/>
            <person name="White B."/>
            <person name="Bason N."/>
            <person name="Mungall K."/>
            <person name="Dougan G."/>
            <person name="Parkhill J."/>
        </authorList>
    </citation>
    <scope>NUCLEOTIDE SEQUENCE [LARGE SCALE GENOMIC DNA]</scope>
    <source>
        <strain>AKU_12601</strain>
    </source>
</reference>
<proteinExistence type="inferred from homology"/>
<sequence>MIGIVLVLASLLSVGGQLCQKQATRPLTTGGRRRHLMLWLGLALICMGAAMVLWLLVLQTLPVGIAYPMLSLNFVWVTLAAWKIWHEQVLPRHWLGVALIISGIIILGSAA</sequence>
<evidence type="ECO:0000255" key="1">
    <source>
        <dbReference type="HAMAP-Rule" id="MF_01869"/>
    </source>
</evidence>
<evidence type="ECO:0000305" key="2"/>
<keyword id="KW-0997">Cell inner membrane</keyword>
<keyword id="KW-1003">Cell membrane</keyword>
<keyword id="KW-0441">Lipid A biosynthesis</keyword>
<keyword id="KW-0444">Lipid biosynthesis</keyword>
<keyword id="KW-0443">Lipid metabolism</keyword>
<keyword id="KW-0448">Lipopolysaccharide biosynthesis</keyword>
<keyword id="KW-0472">Membrane</keyword>
<keyword id="KW-0812">Transmembrane</keyword>
<keyword id="KW-1133">Transmembrane helix</keyword>
<keyword id="KW-0813">Transport</keyword>
<accession>B5BCP3</accession>
<gene>
    <name evidence="1" type="primary">arnE</name>
    <name type="ordered locus">SSPA0525</name>
</gene>